<keyword id="KW-0963">Cytoplasm</keyword>
<keyword id="KW-0274">FAD</keyword>
<keyword id="KW-0285">Flavoprotein</keyword>
<keyword id="KW-0520">NAD</keyword>
<keyword id="KW-0819">tRNA processing</keyword>
<name>MNMG_ACIF5</name>
<comment type="function">
    <text evidence="1">NAD-binding protein involved in the addition of a carboxymethylaminomethyl (cmnm) group at the wobble position (U34) of certain tRNAs, forming tRNA-cmnm(5)s(2)U34.</text>
</comment>
<comment type="cofactor">
    <cofactor evidence="1">
        <name>FAD</name>
        <dbReference type="ChEBI" id="CHEBI:57692"/>
    </cofactor>
</comment>
<comment type="subunit">
    <text evidence="1">Homodimer. Heterotetramer of two MnmE and two MnmG subunits.</text>
</comment>
<comment type="subcellular location">
    <subcellularLocation>
        <location evidence="1">Cytoplasm</location>
    </subcellularLocation>
</comment>
<comment type="similarity">
    <text evidence="1">Belongs to the MnmG family.</text>
</comment>
<evidence type="ECO:0000255" key="1">
    <source>
        <dbReference type="HAMAP-Rule" id="MF_00129"/>
    </source>
</evidence>
<gene>
    <name evidence="1" type="primary">mnmG</name>
    <name evidence="1" type="synonym">gidA</name>
    <name type="ordered locus">Lferr_2818</name>
</gene>
<dbReference type="EMBL" id="CP001132">
    <property type="protein sequence ID" value="ACH85004.1"/>
    <property type="molecule type" value="Genomic_DNA"/>
</dbReference>
<dbReference type="RefSeq" id="WP_012537662.1">
    <property type="nucleotide sequence ID" value="NC_011206.1"/>
</dbReference>
<dbReference type="SMR" id="B5ER53"/>
<dbReference type="GeneID" id="65282198"/>
<dbReference type="KEGG" id="afe:Lferr_2818"/>
<dbReference type="eggNOG" id="COG0445">
    <property type="taxonomic scope" value="Bacteria"/>
</dbReference>
<dbReference type="HOGENOM" id="CLU_007831_2_2_6"/>
<dbReference type="GO" id="GO:0005829">
    <property type="term" value="C:cytosol"/>
    <property type="evidence" value="ECO:0007669"/>
    <property type="project" value="TreeGrafter"/>
</dbReference>
<dbReference type="GO" id="GO:0050660">
    <property type="term" value="F:flavin adenine dinucleotide binding"/>
    <property type="evidence" value="ECO:0007669"/>
    <property type="project" value="UniProtKB-UniRule"/>
</dbReference>
<dbReference type="GO" id="GO:0030488">
    <property type="term" value="P:tRNA methylation"/>
    <property type="evidence" value="ECO:0007669"/>
    <property type="project" value="TreeGrafter"/>
</dbReference>
<dbReference type="GO" id="GO:0002098">
    <property type="term" value="P:tRNA wobble uridine modification"/>
    <property type="evidence" value="ECO:0007669"/>
    <property type="project" value="InterPro"/>
</dbReference>
<dbReference type="FunFam" id="1.10.10.1800:FF:000001">
    <property type="entry name" value="tRNA uridine 5-carboxymethylaminomethyl modification enzyme MnmG"/>
    <property type="match status" value="1"/>
</dbReference>
<dbReference type="FunFam" id="1.10.150.570:FF:000001">
    <property type="entry name" value="tRNA uridine 5-carboxymethylaminomethyl modification enzyme MnmG"/>
    <property type="match status" value="1"/>
</dbReference>
<dbReference type="FunFam" id="3.50.50.60:FF:000002">
    <property type="entry name" value="tRNA uridine 5-carboxymethylaminomethyl modification enzyme MnmG"/>
    <property type="match status" value="1"/>
</dbReference>
<dbReference type="FunFam" id="3.50.50.60:FF:000010">
    <property type="entry name" value="tRNA uridine 5-carboxymethylaminomethyl modification enzyme MnmG"/>
    <property type="match status" value="1"/>
</dbReference>
<dbReference type="Gene3D" id="3.50.50.60">
    <property type="entry name" value="FAD/NAD(P)-binding domain"/>
    <property type="match status" value="2"/>
</dbReference>
<dbReference type="Gene3D" id="1.10.150.570">
    <property type="entry name" value="GidA associated domain, C-terminal subdomain"/>
    <property type="match status" value="1"/>
</dbReference>
<dbReference type="Gene3D" id="1.10.10.1800">
    <property type="entry name" value="tRNA uridine 5-carboxymethylaminomethyl modification enzyme MnmG/GidA"/>
    <property type="match status" value="1"/>
</dbReference>
<dbReference type="HAMAP" id="MF_00129">
    <property type="entry name" value="MnmG_GidA"/>
    <property type="match status" value="1"/>
</dbReference>
<dbReference type="InterPro" id="IPR036188">
    <property type="entry name" value="FAD/NAD-bd_sf"/>
</dbReference>
<dbReference type="InterPro" id="IPR049312">
    <property type="entry name" value="GIDA_C_N"/>
</dbReference>
<dbReference type="InterPro" id="IPR004416">
    <property type="entry name" value="MnmG"/>
</dbReference>
<dbReference type="InterPro" id="IPR002218">
    <property type="entry name" value="MnmG-rel"/>
</dbReference>
<dbReference type="InterPro" id="IPR020595">
    <property type="entry name" value="MnmG-rel_CS"/>
</dbReference>
<dbReference type="InterPro" id="IPR026904">
    <property type="entry name" value="MnmG_C"/>
</dbReference>
<dbReference type="InterPro" id="IPR047001">
    <property type="entry name" value="MnmG_C_subdom"/>
</dbReference>
<dbReference type="InterPro" id="IPR044920">
    <property type="entry name" value="MnmG_C_subdom_sf"/>
</dbReference>
<dbReference type="InterPro" id="IPR040131">
    <property type="entry name" value="MnmG_N"/>
</dbReference>
<dbReference type="NCBIfam" id="TIGR00136">
    <property type="entry name" value="mnmG_gidA"/>
    <property type="match status" value="1"/>
</dbReference>
<dbReference type="PANTHER" id="PTHR11806">
    <property type="entry name" value="GLUCOSE INHIBITED DIVISION PROTEIN A"/>
    <property type="match status" value="1"/>
</dbReference>
<dbReference type="PANTHER" id="PTHR11806:SF0">
    <property type="entry name" value="PROTEIN MTO1 HOMOLOG, MITOCHONDRIAL"/>
    <property type="match status" value="1"/>
</dbReference>
<dbReference type="Pfam" id="PF01134">
    <property type="entry name" value="GIDA"/>
    <property type="match status" value="1"/>
</dbReference>
<dbReference type="Pfam" id="PF21680">
    <property type="entry name" value="GIDA_C_1st"/>
    <property type="match status" value="1"/>
</dbReference>
<dbReference type="Pfam" id="PF13932">
    <property type="entry name" value="SAM_GIDA_C"/>
    <property type="match status" value="1"/>
</dbReference>
<dbReference type="SMART" id="SM01228">
    <property type="entry name" value="GIDA_assoc_3"/>
    <property type="match status" value="1"/>
</dbReference>
<dbReference type="SUPFAM" id="SSF51905">
    <property type="entry name" value="FAD/NAD(P)-binding domain"/>
    <property type="match status" value="1"/>
</dbReference>
<dbReference type="PROSITE" id="PS01280">
    <property type="entry name" value="GIDA_1"/>
    <property type="match status" value="1"/>
</dbReference>
<dbReference type="PROSITE" id="PS01281">
    <property type="entry name" value="GIDA_2"/>
    <property type="match status" value="1"/>
</dbReference>
<organism>
    <name type="scientific">Acidithiobacillus ferrooxidans (strain ATCC 53993 / BNL-5-31)</name>
    <name type="common">Leptospirillum ferrooxidans (ATCC 53993)</name>
    <dbReference type="NCBI Taxonomy" id="380394"/>
    <lineage>
        <taxon>Bacteria</taxon>
        <taxon>Pseudomonadati</taxon>
        <taxon>Pseudomonadota</taxon>
        <taxon>Acidithiobacillia</taxon>
        <taxon>Acidithiobacillales</taxon>
        <taxon>Acidithiobacillaceae</taxon>
        <taxon>Acidithiobacillus</taxon>
    </lineage>
</organism>
<reference key="1">
    <citation type="submission" date="2008-08" db="EMBL/GenBank/DDBJ databases">
        <title>Complete sequence of Acidithiobacillus ferrooxidans ATCC 53993.</title>
        <authorList>
            <person name="Lucas S."/>
            <person name="Copeland A."/>
            <person name="Lapidus A."/>
            <person name="Glavina del Rio T."/>
            <person name="Dalin E."/>
            <person name="Tice H."/>
            <person name="Bruce D."/>
            <person name="Goodwin L."/>
            <person name="Pitluck S."/>
            <person name="Sims D."/>
            <person name="Brettin T."/>
            <person name="Detter J.C."/>
            <person name="Han C."/>
            <person name="Kuske C.R."/>
            <person name="Larimer F."/>
            <person name="Land M."/>
            <person name="Hauser L."/>
            <person name="Kyrpides N."/>
            <person name="Lykidis A."/>
            <person name="Borole A.P."/>
        </authorList>
    </citation>
    <scope>NUCLEOTIDE SEQUENCE [LARGE SCALE GENOMIC DNA]</scope>
    <source>
        <strain>ATCC 53993 / BNL-5-31</strain>
    </source>
</reference>
<sequence length="624" mass="67923">MQNSFDVIVVGGGHAGTEAAAAAARLGVRTLLLTQNLDTIGQMSCNPAIGGIGKGHLVKEVDALGGIMALAIDQAGIQFRTLNASKGPAVRATRAQADRSLYKRAVRRLLEDIPALQLFQGMVGDLLMEGDRLGGVILETGLVLRAAQVVLTTGTFLGGRVHMGDQNYPAGRAGDPPSNALAQRLREMAFPVARLKTGTPPRIDGRSIDYGVLEAQPGDAPPPAFSFMTRRIGVPQLACHITHTNARTHEIIQTNLHQSAMYGGHIQSVGPRYCPSIEDKVVRFADKASHQVFLEPEGLDTHEVYPNGISTSLPFGVQIELVRSMRGLENAVLLRPGYAIEYDYLDPRELHPSLESRRLPGLFCAGQINGTTGYEEAAAQGLLAGLNAARRARELAAWTPGRHEAYLGVMVDDLVTRGLDEPYRMFTSRAEYRLQLREDNADLRLTPHGRALGLVDDQRWTAFSAKQDAVQAERNRLEGLRIHPGSAIAGRIAAKTDQPLSRDVTALELLRRPDWDYASLLQVLDLVPCSDAQACEQLEIECKYAGYVARQHDEITRAARWEGTDIPADMDYAAVRGLSTEVMQRLARQRPQTIGLASRIPGVTPAAVSLLLIHVKRRGLRQAG</sequence>
<proteinExistence type="inferred from homology"/>
<feature type="chain" id="PRO_1000122739" description="tRNA uridine 5-carboxymethylaminomethyl modification enzyme MnmG">
    <location>
        <begin position="1"/>
        <end position="624"/>
    </location>
</feature>
<feature type="binding site" evidence="1">
    <location>
        <begin position="11"/>
        <end position="16"/>
    </location>
    <ligand>
        <name>FAD</name>
        <dbReference type="ChEBI" id="CHEBI:57692"/>
    </ligand>
</feature>
<feature type="binding site" evidence="1">
    <location>
        <position position="123"/>
    </location>
    <ligand>
        <name>FAD</name>
        <dbReference type="ChEBI" id="CHEBI:57692"/>
    </ligand>
</feature>
<feature type="binding site" evidence="1">
    <location>
        <position position="178"/>
    </location>
    <ligand>
        <name>FAD</name>
        <dbReference type="ChEBI" id="CHEBI:57692"/>
    </ligand>
</feature>
<feature type="binding site" evidence="1">
    <location>
        <begin position="270"/>
        <end position="284"/>
    </location>
    <ligand>
        <name>NAD(+)</name>
        <dbReference type="ChEBI" id="CHEBI:57540"/>
    </ligand>
</feature>
<feature type="binding site" evidence="1">
    <location>
        <position position="367"/>
    </location>
    <ligand>
        <name>FAD</name>
        <dbReference type="ChEBI" id="CHEBI:57692"/>
    </ligand>
</feature>
<accession>B5ER53</accession>
<protein>
    <recommendedName>
        <fullName evidence="1">tRNA uridine 5-carboxymethylaminomethyl modification enzyme MnmG</fullName>
    </recommendedName>
    <alternativeName>
        <fullName evidence="1">Glucose-inhibited division protein A</fullName>
    </alternativeName>
</protein>